<keyword id="KW-0025">Alternative splicing</keyword>
<keyword id="KW-0175">Coiled coil</keyword>
<keyword id="KW-0963">Cytoplasm</keyword>
<keyword id="KW-0238">DNA-binding</keyword>
<keyword id="KW-0341">Growth regulation</keyword>
<keyword id="KW-0539">Nucleus</keyword>
<keyword id="KW-1185">Reference proteome</keyword>
<keyword id="KW-0346">Stress response</keyword>
<keyword id="KW-0804">Transcription</keyword>
<keyword id="KW-0805">Transcription regulation</keyword>
<feature type="chain" id="PRO_0000451164" description="bZIP transcription factor 29">
    <location>
        <begin position="1"/>
        <end position="547"/>
    </location>
</feature>
<feature type="domain" description="bZIP" evidence="2">
    <location>
        <begin position="394"/>
        <end position="457"/>
    </location>
</feature>
<feature type="region of interest" description="Disordered" evidence="3">
    <location>
        <begin position="1"/>
        <end position="199"/>
    </location>
</feature>
<feature type="region of interest" description="Disordered" evidence="3">
    <location>
        <begin position="244"/>
        <end position="312"/>
    </location>
</feature>
<feature type="region of interest" description="Disordered" evidence="3">
    <location>
        <begin position="333"/>
        <end position="356"/>
    </location>
</feature>
<feature type="region of interest" description="Basic motif" evidence="2">
    <location>
        <begin position="396"/>
        <end position="417"/>
    </location>
</feature>
<feature type="region of interest" description="Leucine-zipper" evidence="2">
    <location>
        <begin position="422"/>
        <end position="457"/>
    </location>
</feature>
<feature type="region of interest" description="Disordered" evidence="3">
    <location>
        <begin position="517"/>
        <end position="547"/>
    </location>
</feature>
<feature type="coiled-coil region" evidence="1">
    <location>
        <begin position="416"/>
        <end position="469"/>
    </location>
</feature>
<feature type="compositionally biased region" description="Polar residues" evidence="3">
    <location>
        <begin position="15"/>
        <end position="52"/>
    </location>
</feature>
<feature type="compositionally biased region" description="Pro residues" evidence="3">
    <location>
        <begin position="63"/>
        <end position="73"/>
    </location>
</feature>
<feature type="compositionally biased region" description="Polar residues" evidence="3">
    <location>
        <begin position="74"/>
        <end position="89"/>
    </location>
</feature>
<feature type="compositionally biased region" description="Basic and acidic residues" evidence="3">
    <location>
        <begin position="120"/>
        <end position="132"/>
    </location>
</feature>
<feature type="compositionally biased region" description="Polar residues" evidence="3">
    <location>
        <begin position="134"/>
        <end position="157"/>
    </location>
</feature>
<feature type="compositionally biased region" description="Basic and acidic residues" evidence="3">
    <location>
        <begin position="249"/>
        <end position="263"/>
    </location>
</feature>
<feature type="compositionally biased region" description="Polar residues" evidence="3">
    <location>
        <begin position="264"/>
        <end position="275"/>
    </location>
</feature>
<feature type="compositionally biased region" description="Low complexity" evidence="3">
    <location>
        <begin position="279"/>
        <end position="294"/>
    </location>
</feature>
<feature type="compositionally biased region" description="Polar residues" evidence="3">
    <location>
        <begin position="344"/>
        <end position="356"/>
    </location>
</feature>
<feature type="compositionally biased region" description="Low complexity" evidence="3">
    <location>
        <begin position="517"/>
        <end position="535"/>
    </location>
</feature>
<feature type="compositionally biased region" description="Polar residues" evidence="3">
    <location>
        <begin position="536"/>
        <end position="547"/>
    </location>
</feature>
<feature type="splice variant" id="VSP_060767" description="In isoform 2.">
    <original>K</original>
    <variation>KRNDPLF</variation>
    <location>
        <position position="399"/>
    </location>
</feature>
<feature type="sequence conflict" description="In Ref. 4; AAL87314." evidence="10" ref="4">
    <original>E</original>
    <variation>K</variation>
    <location>
        <position position="217"/>
    </location>
</feature>
<comment type="function">
    <text evidence="4 5 6 7">Transcription factor that acts as a repressor of reproductive development, meristem size and plant growth (PubMed:27402171). Regulates meristem size, cell size and cell number during plant development (PubMed:27660483). Binds to the promoters of the cell cycle regulators CYCB1-2 and SMR4, and genes involved in cell wall organization, such as XTH9, EXPA1 and EXPA3 (PubMed:27660483). Possesses transactivation activity in yeast (PubMed:25093810). Possesses transactivation activity in plant protoplasts (PubMed:27660483). Plays a role in abiotic stress response by binding to the 5'-CAGCTG-3' DNA sequence found in the promoters of MYB44 and TRX8 (PubMed:27660483). Plays a role in osmosensory response by binding to the 5'-AGCTGT/G-3' DNA sequence found in the promoters of the hypoosmolarity-responsive genes CYP707A1 and CYP707A3 (PubMed:25093810, PubMed:27660483). Binds to the 5'-AGCTGT-3' DNA sequence found in the promoter of the ZAT1 gene in response to abiotic stresses, such as oxidative stress, high-light, osmotic shock, salt and heat stresses (PubMed:26923089).</text>
</comment>
<comment type="subunit">
    <text evidence="7">Forms homodimers.</text>
</comment>
<comment type="subcellular location">
    <subcellularLocation>
        <location evidence="4">Cytoplasm</location>
    </subcellularLocation>
    <subcellularLocation>
        <location evidence="4">Nucleus</location>
    </subcellularLocation>
    <text evidence="4">Transiently accumulates in the nucleus when cells are exposed to hypoosmotic conditions.</text>
</comment>
<comment type="alternative products">
    <event type="alternative splicing"/>
    <isoform>
        <id>Q8H1F0-1</id>
        <name>1</name>
        <sequence type="displayed"/>
    </isoform>
    <isoform>
        <id>Q8H1F0-2</id>
        <name>2</name>
        <sequence type="described" ref="VSP_060767"/>
    </isoform>
</comment>
<comment type="tissue specificity">
    <text evidence="4 7">Expressed in roots, leaves and flowers (PubMed:25093810). Expressed in the root tips, lateral root primordia, and guard cells of leaves, hypocotyls and anthers (PubMed:27660483).</text>
</comment>
<comment type="disruption phenotype">
    <text evidence="6">Increased size of rosette leaves, increased plant height and increased length of siliques.</text>
</comment>
<comment type="miscellaneous">
    <text evidence="7">Plants lines expressing a bZIP29-SRDX dominant-negative repressor under a constitutive 35S promoter are seedling lethal.</text>
</comment>
<protein>
    <recommendedName>
        <fullName evidence="8">bZIP transcription factor 29</fullName>
        <shortName evidence="8">AtbZIP29</shortName>
    </recommendedName>
    <alternativeName>
        <fullName evidence="9">Protein DRINK ME-LIKE</fullName>
    </alternativeName>
</protein>
<accession>Q8H1F0</accession>
<accession>Q8RXK4</accession>
<accession>Q9T0J7</accession>
<gene>
    <name evidence="8" type="primary">BZIP29</name>
    <name evidence="9" type="synonym">DKML</name>
    <name evidence="11" type="ordered locus">At4g38900</name>
    <name evidence="12" type="ORF">F19H22.5</name>
</gene>
<name>BZP29_ARATH</name>
<proteinExistence type="evidence at transcript level"/>
<organism>
    <name type="scientific">Arabidopsis thaliana</name>
    <name type="common">Mouse-ear cress</name>
    <dbReference type="NCBI Taxonomy" id="3702"/>
    <lineage>
        <taxon>Eukaryota</taxon>
        <taxon>Viridiplantae</taxon>
        <taxon>Streptophyta</taxon>
        <taxon>Embryophyta</taxon>
        <taxon>Tracheophyta</taxon>
        <taxon>Spermatophyta</taxon>
        <taxon>Magnoliopsida</taxon>
        <taxon>eudicotyledons</taxon>
        <taxon>Gunneridae</taxon>
        <taxon>Pentapetalae</taxon>
        <taxon>rosids</taxon>
        <taxon>malvids</taxon>
        <taxon>Brassicales</taxon>
        <taxon>Brassicaceae</taxon>
        <taxon>Camelineae</taxon>
        <taxon>Arabidopsis</taxon>
    </lineage>
</organism>
<evidence type="ECO:0000255" key="1"/>
<evidence type="ECO:0000255" key="2">
    <source>
        <dbReference type="PROSITE-ProRule" id="PRU00978"/>
    </source>
</evidence>
<evidence type="ECO:0000256" key="3">
    <source>
        <dbReference type="SAM" id="MobiDB-lite"/>
    </source>
</evidence>
<evidence type="ECO:0000269" key="4">
    <source>
    </source>
</evidence>
<evidence type="ECO:0000269" key="5">
    <source>
    </source>
</evidence>
<evidence type="ECO:0000269" key="6">
    <source>
    </source>
</evidence>
<evidence type="ECO:0000269" key="7">
    <source>
    </source>
</evidence>
<evidence type="ECO:0000303" key="8">
    <source>
    </source>
</evidence>
<evidence type="ECO:0000303" key="9">
    <source>
    </source>
</evidence>
<evidence type="ECO:0000305" key="10"/>
<evidence type="ECO:0000312" key="11">
    <source>
        <dbReference type="Araport" id="AT4G38900"/>
    </source>
</evidence>
<evidence type="ECO:0000312" key="12">
    <source>
        <dbReference type="EMBL" id="AEE86989.1"/>
    </source>
</evidence>
<sequence>MGDTEKCNSDMIQRLHSSFGTTSSSIPKNPISQLDLNPNFIRSSAPQFSKPFSDSGKRIGVPPSHPNLIPPTSPFSQIPTTRQPGSHNFNPGGANHSRSMSQPNSFFSFDSLPPLSPSPFRDHDVSMEDRDSGVFNSNHSLPPSPFTRCNSTSSSSLRVGESLPPRKSHRRSNSDIPSGFNSMPLIPPRPLERSFSGGECADWSKSNPFVKKESSCEREGVGEREAMDDLFSAYMNLENIDVLNSSEADDSKNGNENRDDMESSRASGTKTNGSDTEGESSSVNESANNNMNSSGEKRESVKRRAAGGDIAPTTRHYRSVSVDSCFMEKLSFGDESLKPPPSPGSMSRKVSPTNSVDGNSGAAFSIEFNNGEFTAAEMKKIMANDKLAEMAMSDPKRVKRILANRQSAARSKERKMRYIVELEHKVQTLQTEATTLSAQLTLLQRDMMGLTNQNNELKFRLQAMEQQARLRDALNEALNGEVQRLKLAIGESSQNESERSKMQSLNAEMFQQLNISQLRQQPQQMQQQSHQQNHQNGTMATKSESNE</sequence>
<dbReference type="EMBL" id="AF401297">
    <property type="protein sequence ID" value="AAK84220.1"/>
    <property type="molecule type" value="mRNA"/>
</dbReference>
<dbReference type="EMBL" id="AL035656">
    <property type="protein sequence ID" value="CAB38624.1"/>
    <property type="molecule type" value="Genomic_DNA"/>
</dbReference>
<dbReference type="EMBL" id="AL161594">
    <property type="protein sequence ID" value="CAB80553.1"/>
    <property type="molecule type" value="Genomic_DNA"/>
</dbReference>
<dbReference type="EMBL" id="CP002687">
    <property type="protein sequence ID" value="AEE86988.1"/>
    <property type="molecule type" value="Genomic_DNA"/>
</dbReference>
<dbReference type="EMBL" id="CP002687">
    <property type="protein sequence ID" value="AEE86989.1"/>
    <property type="molecule type" value="Genomic_DNA"/>
</dbReference>
<dbReference type="EMBL" id="CP002687">
    <property type="protein sequence ID" value="AEE86990.1"/>
    <property type="molecule type" value="Genomic_DNA"/>
</dbReference>
<dbReference type="EMBL" id="AY080839">
    <property type="protein sequence ID" value="AAL87314.1"/>
    <property type="molecule type" value="mRNA"/>
</dbReference>
<dbReference type="EMBL" id="AY150435">
    <property type="protein sequence ID" value="AAN12977.1"/>
    <property type="molecule type" value="mRNA"/>
</dbReference>
<dbReference type="PIR" id="T06089">
    <property type="entry name" value="T06089"/>
</dbReference>
<dbReference type="RefSeq" id="NP_001031810.1">
    <molecule id="Q8H1F0-1"/>
    <property type="nucleotide sequence ID" value="NM_001036733.4"/>
</dbReference>
<dbReference type="RefSeq" id="NP_195601.1">
    <molecule id="Q8H1F0-2"/>
    <property type="nucleotide sequence ID" value="NM_120050.4"/>
</dbReference>
<dbReference type="RefSeq" id="NP_849520.1">
    <molecule id="Q8H1F0-1"/>
    <property type="nucleotide sequence ID" value="NM_179189.4"/>
</dbReference>
<dbReference type="SMR" id="Q8H1F0"/>
<dbReference type="FunCoup" id="Q8H1F0">
    <property type="interactions" value="912"/>
</dbReference>
<dbReference type="IntAct" id="Q8H1F0">
    <property type="interactions" value="9"/>
</dbReference>
<dbReference type="STRING" id="3702.Q9T0J7"/>
<dbReference type="iPTMnet" id="Q8H1F0"/>
<dbReference type="PaxDb" id="3702-AT4G38900.1"/>
<dbReference type="EnsemblPlants" id="AT4G38900.1">
    <molecule id="Q8H1F0-2"/>
    <property type="protein sequence ID" value="AT4G38900.1"/>
    <property type="gene ID" value="AT4G38900"/>
</dbReference>
<dbReference type="EnsemblPlants" id="AT4G38900.2">
    <molecule id="Q8H1F0-1"/>
    <property type="protein sequence ID" value="AT4G38900.2"/>
    <property type="gene ID" value="AT4G38900"/>
</dbReference>
<dbReference type="EnsemblPlants" id="AT4G38900.3">
    <molecule id="Q8H1F0-1"/>
    <property type="protein sequence ID" value="AT4G38900.3"/>
    <property type="gene ID" value="AT4G38900"/>
</dbReference>
<dbReference type="GeneID" id="830045"/>
<dbReference type="Gramene" id="AT4G38900.1">
    <molecule id="Q8H1F0-2"/>
    <property type="protein sequence ID" value="AT4G38900.1"/>
    <property type="gene ID" value="AT4G38900"/>
</dbReference>
<dbReference type="Gramene" id="AT4G38900.2">
    <molecule id="Q8H1F0-1"/>
    <property type="protein sequence ID" value="AT4G38900.2"/>
    <property type="gene ID" value="AT4G38900"/>
</dbReference>
<dbReference type="Gramene" id="AT4G38900.3">
    <molecule id="Q8H1F0-1"/>
    <property type="protein sequence ID" value="AT4G38900.3"/>
    <property type="gene ID" value="AT4G38900"/>
</dbReference>
<dbReference type="KEGG" id="ath:AT4G38900"/>
<dbReference type="Araport" id="AT4G38900"/>
<dbReference type="TAIR" id="AT4G38900">
    <property type="gene designation" value="BZIP29"/>
</dbReference>
<dbReference type="eggNOG" id="ENOG502QRIA">
    <property type="taxonomic scope" value="Eukaryota"/>
</dbReference>
<dbReference type="HOGENOM" id="CLU_026205_4_1_1"/>
<dbReference type="InParanoid" id="Q8H1F0"/>
<dbReference type="OMA" id="FRGQMRQ"/>
<dbReference type="PhylomeDB" id="Q8H1F0"/>
<dbReference type="CD-CODE" id="4299E36E">
    <property type="entry name" value="Nucleolus"/>
</dbReference>
<dbReference type="PRO" id="PR:Q8H1F0"/>
<dbReference type="Proteomes" id="UP000006548">
    <property type="component" value="Chromosome 4"/>
</dbReference>
<dbReference type="ExpressionAtlas" id="Q8H1F0">
    <property type="expression patterns" value="baseline and differential"/>
</dbReference>
<dbReference type="GO" id="GO:0005737">
    <property type="term" value="C:cytoplasm"/>
    <property type="evidence" value="ECO:0000314"/>
    <property type="project" value="TAIR"/>
</dbReference>
<dbReference type="GO" id="GO:0005829">
    <property type="term" value="C:cytosol"/>
    <property type="evidence" value="ECO:0000314"/>
    <property type="project" value="TAIR"/>
</dbReference>
<dbReference type="GO" id="GO:0005634">
    <property type="term" value="C:nucleus"/>
    <property type="evidence" value="ECO:0000314"/>
    <property type="project" value="TAIR"/>
</dbReference>
<dbReference type="GO" id="GO:0003700">
    <property type="term" value="F:DNA-binding transcription factor activity"/>
    <property type="evidence" value="ECO:0000250"/>
    <property type="project" value="TAIR"/>
</dbReference>
<dbReference type="GO" id="GO:0042803">
    <property type="term" value="F:protein homodimerization activity"/>
    <property type="evidence" value="ECO:0000353"/>
    <property type="project" value="UniProtKB"/>
</dbReference>
<dbReference type="GO" id="GO:0043565">
    <property type="term" value="F:sequence-specific DNA binding"/>
    <property type="evidence" value="ECO:0000314"/>
    <property type="project" value="UniProtKB"/>
</dbReference>
<dbReference type="GO" id="GO:0000976">
    <property type="term" value="F:transcription cis-regulatory region binding"/>
    <property type="evidence" value="ECO:0000353"/>
    <property type="project" value="TAIR"/>
</dbReference>
<dbReference type="GO" id="GO:0006355">
    <property type="term" value="P:regulation of DNA-templated transcription"/>
    <property type="evidence" value="ECO:0000314"/>
    <property type="project" value="UniProtKB"/>
</dbReference>
<dbReference type="GO" id="GO:0090567">
    <property type="term" value="P:reproductive shoot system development"/>
    <property type="evidence" value="ECO:0000315"/>
    <property type="project" value="TAIR"/>
</dbReference>
<dbReference type="CDD" id="cd14703">
    <property type="entry name" value="bZIP_plant_RF2"/>
    <property type="match status" value="1"/>
</dbReference>
<dbReference type="FunFam" id="1.20.5.170:FF:000009">
    <property type="entry name" value="probable transcription factor PosF21"/>
    <property type="match status" value="1"/>
</dbReference>
<dbReference type="Gene3D" id="1.20.5.170">
    <property type="match status" value="1"/>
</dbReference>
<dbReference type="InterPro" id="IPR004827">
    <property type="entry name" value="bZIP"/>
</dbReference>
<dbReference type="InterPro" id="IPR044759">
    <property type="entry name" value="bZIP_RF2"/>
</dbReference>
<dbReference type="InterPro" id="IPR046347">
    <property type="entry name" value="bZIP_sf"/>
</dbReference>
<dbReference type="PANTHER" id="PTHR13690:SF80">
    <property type="entry name" value="BZIP TRANSCRIPTION FACTOR FAMILY PROTEIN-RELATED"/>
    <property type="match status" value="1"/>
</dbReference>
<dbReference type="PANTHER" id="PTHR13690">
    <property type="entry name" value="TRANSCRIPTION FACTOR POSF21-RELATED"/>
    <property type="match status" value="1"/>
</dbReference>
<dbReference type="Pfam" id="PF00170">
    <property type="entry name" value="bZIP_1"/>
    <property type="match status" value="1"/>
</dbReference>
<dbReference type="SMART" id="SM00338">
    <property type="entry name" value="BRLZ"/>
    <property type="match status" value="1"/>
</dbReference>
<dbReference type="SUPFAM" id="SSF57959">
    <property type="entry name" value="Leucine zipper domain"/>
    <property type="match status" value="1"/>
</dbReference>
<dbReference type="PROSITE" id="PS50217">
    <property type="entry name" value="BZIP"/>
    <property type="match status" value="1"/>
</dbReference>
<reference key="1">
    <citation type="journal article" date="2002" name="Trends Plant Sci.">
        <title>bZIP transcription factors in Arabidopsis.</title>
        <authorList>
            <person name="Jakoby M."/>
            <person name="Weisshaar B."/>
            <person name="Droege-Laser W."/>
            <person name="Vicente-Carbajosa J."/>
            <person name="Tiedemann J."/>
            <person name="Kroj T."/>
            <person name="Parcy F."/>
        </authorList>
    </citation>
    <scope>NUCLEOTIDE SEQUENCE [MRNA] (ISOFORM 2)</scope>
    <scope>GENE FAMILY</scope>
    <scope>NOMENCLATURE</scope>
</reference>
<reference key="2">
    <citation type="journal article" date="1999" name="Nature">
        <title>Sequence and analysis of chromosome 4 of the plant Arabidopsis thaliana.</title>
        <authorList>
            <person name="Mayer K.F.X."/>
            <person name="Schueller C."/>
            <person name="Wambutt R."/>
            <person name="Murphy G."/>
            <person name="Volckaert G."/>
            <person name="Pohl T."/>
            <person name="Duesterhoeft A."/>
            <person name="Stiekema W."/>
            <person name="Entian K.-D."/>
            <person name="Terryn N."/>
            <person name="Harris B."/>
            <person name="Ansorge W."/>
            <person name="Brandt P."/>
            <person name="Grivell L.A."/>
            <person name="Rieger M."/>
            <person name="Weichselgartner M."/>
            <person name="de Simone V."/>
            <person name="Obermaier B."/>
            <person name="Mache R."/>
            <person name="Mueller M."/>
            <person name="Kreis M."/>
            <person name="Delseny M."/>
            <person name="Puigdomenech P."/>
            <person name="Watson M."/>
            <person name="Schmidtheini T."/>
            <person name="Reichert B."/>
            <person name="Portetelle D."/>
            <person name="Perez-Alonso M."/>
            <person name="Boutry M."/>
            <person name="Bancroft I."/>
            <person name="Vos P."/>
            <person name="Hoheisel J."/>
            <person name="Zimmermann W."/>
            <person name="Wedler H."/>
            <person name="Ridley P."/>
            <person name="Langham S.-A."/>
            <person name="McCullagh B."/>
            <person name="Bilham L."/>
            <person name="Robben J."/>
            <person name="van der Schueren J."/>
            <person name="Grymonprez B."/>
            <person name="Chuang Y.-J."/>
            <person name="Vandenbussche F."/>
            <person name="Braeken M."/>
            <person name="Weltjens I."/>
            <person name="Voet M."/>
            <person name="Bastiaens I."/>
            <person name="Aert R."/>
            <person name="Defoor E."/>
            <person name="Weitzenegger T."/>
            <person name="Bothe G."/>
            <person name="Ramsperger U."/>
            <person name="Hilbert H."/>
            <person name="Braun M."/>
            <person name="Holzer E."/>
            <person name="Brandt A."/>
            <person name="Peters S."/>
            <person name="van Staveren M."/>
            <person name="Dirkse W."/>
            <person name="Mooijman P."/>
            <person name="Klein Lankhorst R."/>
            <person name="Rose M."/>
            <person name="Hauf J."/>
            <person name="Koetter P."/>
            <person name="Berneiser S."/>
            <person name="Hempel S."/>
            <person name="Feldpausch M."/>
            <person name="Lamberth S."/>
            <person name="Van den Daele H."/>
            <person name="De Keyser A."/>
            <person name="Buysshaert C."/>
            <person name="Gielen J."/>
            <person name="Villarroel R."/>
            <person name="De Clercq R."/>
            <person name="van Montagu M."/>
            <person name="Rogers J."/>
            <person name="Cronin A."/>
            <person name="Quail M.A."/>
            <person name="Bray-Allen S."/>
            <person name="Clark L."/>
            <person name="Doggett J."/>
            <person name="Hall S."/>
            <person name="Kay M."/>
            <person name="Lennard N."/>
            <person name="McLay K."/>
            <person name="Mayes R."/>
            <person name="Pettett A."/>
            <person name="Rajandream M.A."/>
            <person name="Lyne M."/>
            <person name="Benes V."/>
            <person name="Rechmann S."/>
            <person name="Borkova D."/>
            <person name="Bloecker H."/>
            <person name="Scharfe M."/>
            <person name="Grimm M."/>
            <person name="Loehnert T.-H."/>
            <person name="Dose S."/>
            <person name="de Haan M."/>
            <person name="Maarse A.C."/>
            <person name="Schaefer M."/>
            <person name="Mueller-Auer S."/>
            <person name="Gabel C."/>
            <person name="Fuchs M."/>
            <person name="Fartmann B."/>
            <person name="Granderath K."/>
            <person name="Dauner D."/>
            <person name="Herzl A."/>
            <person name="Neumann S."/>
            <person name="Argiriou A."/>
            <person name="Vitale D."/>
            <person name="Liguori R."/>
            <person name="Piravandi E."/>
            <person name="Massenet O."/>
            <person name="Quigley F."/>
            <person name="Clabauld G."/>
            <person name="Muendlein A."/>
            <person name="Felber R."/>
            <person name="Schnabl S."/>
            <person name="Hiller R."/>
            <person name="Schmidt W."/>
            <person name="Lecharny A."/>
            <person name="Aubourg S."/>
            <person name="Chefdor F."/>
            <person name="Cooke R."/>
            <person name="Berger C."/>
            <person name="Monfort A."/>
            <person name="Casacuberta E."/>
            <person name="Gibbons T."/>
            <person name="Weber N."/>
            <person name="Vandenbol M."/>
            <person name="Bargues M."/>
            <person name="Terol J."/>
            <person name="Torres A."/>
            <person name="Perez-Perez A."/>
            <person name="Purnelle B."/>
            <person name="Bent E."/>
            <person name="Johnson S."/>
            <person name="Tacon D."/>
            <person name="Jesse T."/>
            <person name="Heijnen L."/>
            <person name="Schwarz S."/>
            <person name="Scholler P."/>
            <person name="Heber S."/>
            <person name="Francs P."/>
            <person name="Bielke C."/>
            <person name="Frishman D."/>
            <person name="Haase D."/>
            <person name="Lemcke K."/>
            <person name="Mewes H.-W."/>
            <person name="Stocker S."/>
            <person name="Zaccaria P."/>
            <person name="Bevan M."/>
            <person name="Wilson R.K."/>
            <person name="de la Bastide M."/>
            <person name="Habermann K."/>
            <person name="Parnell L."/>
            <person name="Dedhia N."/>
            <person name="Gnoj L."/>
            <person name="Schutz K."/>
            <person name="Huang E."/>
            <person name="Spiegel L."/>
            <person name="Sekhon M."/>
            <person name="Murray J."/>
            <person name="Sheet P."/>
            <person name="Cordes M."/>
            <person name="Abu-Threideh J."/>
            <person name="Stoneking T."/>
            <person name="Kalicki J."/>
            <person name="Graves T."/>
            <person name="Harmon G."/>
            <person name="Edwards J."/>
            <person name="Latreille P."/>
            <person name="Courtney L."/>
            <person name="Cloud J."/>
            <person name="Abbott A."/>
            <person name="Scott K."/>
            <person name="Johnson D."/>
            <person name="Minx P."/>
            <person name="Bentley D."/>
            <person name="Fulton B."/>
            <person name="Miller N."/>
            <person name="Greco T."/>
            <person name="Kemp K."/>
            <person name="Kramer J."/>
            <person name="Fulton L."/>
            <person name="Mardis E."/>
            <person name="Dante M."/>
            <person name="Pepin K."/>
            <person name="Hillier L.W."/>
            <person name="Nelson J."/>
            <person name="Spieth J."/>
            <person name="Ryan E."/>
            <person name="Andrews S."/>
            <person name="Geisel C."/>
            <person name="Layman D."/>
            <person name="Du H."/>
            <person name="Ali J."/>
            <person name="Berghoff A."/>
            <person name="Jones K."/>
            <person name="Drone K."/>
            <person name="Cotton M."/>
            <person name="Joshu C."/>
            <person name="Antonoiu B."/>
            <person name="Zidanic M."/>
            <person name="Strong C."/>
            <person name="Sun H."/>
            <person name="Lamar B."/>
            <person name="Yordan C."/>
            <person name="Ma P."/>
            <person name="Zhong J."/>
            <person name="Preston R."/>
            <person name="Vil D."/>
            <person name="Shekher M."/>
            <person name="Matero A."/>
            <person name="Shah R."/>
            <person name="Swaby I.K."/>
            <person name="O'Shaughnessy A."/>
            <person name="Rodriguez M."/>
            <person name="Hoffman J."/>
            <person name="Till S."/>
            <person name="Granat S."/>
            <person name="Shohdy N."/>
            <person name="Hasegawa A."/>
            <person name="Hameed A."/>
            <person name="Lodhi M."/>
            <person name="Johnson A."/>
            <person name="Chen E."/>
            <person name="Marra M.A."/>
            <person name="Martienssen R."/>
            <person name="McCombie W.R."/>
        </authorList>
    </citation>
    <scope>NUCLEOTIDE SEQUENCE [LARGE SCALE GENOMIC DNA]</scope>
    <source>
        <strain>cv. Columbia</strain>
    </source>
</reference>
<reference key="3">
    <citation type="journal article" date="2017" name="Plant J.">
        <title>Araport11: a complete reannotation of the Arabidopsis thaliana reference genome.</title>
        <authorList>
            <person name="Cheng C.Y."/>
            <person name="Krishnakumar V."/>
            <person name="Chan A.P."/>
            <person name="Thibaud-Nissen F."/>
            <person name="Schobel S."/>
            <person name="Town C.D."/>
        </authorList>
    </citation>
    <scope>GENOME REANNOTATION</scope>
    <source>
        <strain>cv. Columbia</strain>
    </source>
</reference>
<reference key="4">
    <citation type="journal article" date="2003" name="Science">
        <title>Empirical analysis of transcriptional activity in the Arabidopsis genome.</title>
        <authorList>
            <person name="Yamada K."/>
            <person name="Lim J."/>
            <person name="Dale J.M."/>
            <person name="Chen H."/>
            <person name="Shinn P."/>
            <person name="Palm C.J."/>
            <person name="Southwick A.M."/>
            <person name="Wu H.C."/>
            <person name="Kim C.J."/>
            <person name="Nguyen M."/>
            <person name="Pham P.K."/>
            <person name="Cheuk R.F."/>
            <person name="Karlin-Newmann G."/>
            <person name="Liu S.X."/>
            <person name="Lam B."/>
            <person name="Sakano H."/>
            <person name="Wu T."/>
            <person name="Yu G."/>
            <person name="Miranda M."/>
            <person name="Quach H.L."/>
            <person name="Tripp M."/>
            <person name="Chang C.H."/>
            <person name="Lee J.M."/>
            <person name="Toriumi M.J."/>
            <person name="Chan M.M."/>
            <person name="Tang C.C."/>
            <person name="Onodera C.S."/>
            <person name="Deng J.M."/>
            <person name="Akiyama K."/>
            <person name="Ansari Y."/>
            <person name="Arakawa T."/>
            <person name="Banh J."/>
            <person name="Banno F."/>
            <person name="Bowser L."/>
            <person name="Brooks S.Y."/>
            <person name="Carninci P."/>
            <person name="Chao Q."/>
            <person name="Choy N."/>
            <person name="Enju A."/>
            <person name="Goldsmith A.D."/>
            <person name="Gurjal M."/>
            <person name="Hansen N.F."/>
            <person name="Hayashizaki Y."/>
            <person name="Johnson-Hopson C."/>
            <person name="Hsuan V.W."/>
            <person name="Iida K."/>
            <person name="Karnes M."/>
            <person name="Khan S."/>
            <person name="Koesema E."/>
            <person name="Ishida J."/>
            <person name="Jiang P.X."/>
            <person name="Jones T."/>
            <person name="Kawai J."/>
            <person name="Kamiya A."/>
            <person name="Meyers C."/>
            <person name="Nakajima M."/>
            <person name="Narusaka M."/>
            <person name="Seki M."/>
            <person name="Sakurai T."/>
            <person name="Satou M."/>
            <person name="Tamse R."/>
            <person name="Vaysberg M."/>
            <person name="Wallender E.K."/>
            <person name="Wong C."/>
            <person name="Yamamura Y."/>
            <person name="Yuan S."/>
            <person name="Shinozaki K."/>
            <person name="Davis R.W."/>
            <person name="Theologis A."/>
            <person name="Ecker J.R."/>
        </authorList>
    </citation>
    <scope>NUCLEOTIDE SEQUENCE [LARGE SCALE MRNA] (ISOFORM 1)</scope>
    <source>
        <strain>cv. Columbia</strain>
    </source>
</reference>
<reference key="5">
    <citation type="journal article" date="2014" name="PLoS ONE">
        <title>Analysis of functions of VIP1 and its close homologs in osmosensory responses of Arabidopsis thaliana.</title>
        <authorList>
            <person name="Tsugama D."/>
            <person name="Liu S."/>
            <person name="Takano T."/>
        </authorList>
    </citation>
    <scope>FUNCTION</scope>
    <scope>SUBCELLULAR LOCATION</scope>
    <scope>TISSUE SPECIFICITY</scope>
</reference>
<reference key="6">
    <citation type="journal article" date="2016" name="J. Exp. Bot.">
        <title>Functional characterization of the Arabidopsis transcription factor bZIP29 reveals its role in leaf and root development.</title>
        <authorList>
            <person name="Van Leene J."/>
            <person name="Blomme J."/>
            <person name="Kulkarni S.R."/>
            <person name="Cannoot B."/>
            <person name="De Winne N."/>
            <person name="Eeckhout D."/>
            <person name="Persiau G."/>
            <person name="Van De Slijke E."/>
            <person name="Vercruysse L."/>
            <person name="Vanden Bossche R."/>
            <person name="Heyndrickx K.S."/>
            <person name="Vanneste S."/>
            <person name="Goossens A."/>
            <person name="Gevaert K."/>
            <person name="Vandepoele K."/>
            <person name="Gonzalez N."/>
            <person name="Inze D."/>
            <person name="De Jaeger G."/>
        </authorList>
    </citation>
    <scope>FUNCTION</scope>
    <scope>HOMODIMERIZATION</scope>
    <scope>TISSUE SPECIFICITY</scope>
</reference>
<reference key="7">
    <citation type="journal article" date="2016" name="Plant J.">
        <title>Altered expression of the bZIP transcription factor DRINK ME affects growth and reproductive development in Arabidopsis thaliana.</title>
        <authorList>
            <person name="Lozano-Sotomayor P."/>
            <person name="Chavez Montes R.A."/>
            <person name="Silvestre-Vano M."/>
            <person name="Herrera-Ubaldo H."/>
            <person name="Greco R."/>
            <person name="Pablo-Villa J."/>
            <person name="Galliani B.M."/>
            <person name="Diaz-Ramirez D."/>
            <person name="Weemen M."/>
            <person name="Boutilier K."/>
            <person name="Pereira A."/>
            <person name="Colombo L."/>
            <person name="Madueno F."/>
            <person name="Marsch-Martinez N."/>
            <person name="de Folter S."/>
        </authorList>
    </citation>
    <scope>FUNCTION</scope>
    <scope>DISRUPTION PHENOTYPE</scope>
</reference>
<reference key="8">
    <citation type="journal article" date="2016" name="Physiol. Plantarum">
        <title>Identification of novel transcriptional regulators of Zat12 using comprehensive yeast one-hybrid screens.</title>
        <authorList>
            <person name="Ben Daniel B.H."/>
            <person name="Cattan E."/>
            <person name="Wachtel C."/>
            <person name="Avrahami D."/>
            <person name="Glick Y."/>
            <person name="Malichy A."/>
            <person name="Gerber D."/>
            <person name="Miller G."/>
        </authorList>
    </citation>
    <scope>FUNCTION</scope>
</reference>